<accession>Q8SSH3</accession>
<reference key="1">
    <citation type="journal article" date="2001" name="Nature">
        <title>Genome sequence and gene compaction of the eukaryote parasite Encephalitozoon cuniculi.</title>
        <authorList>
            <person name="Katinka M.D."/>
            <person name="Duprat S."/>
            <person name="Cornillot E."/>
            <person name="Metenier G."/>
            <person name="Thomarat F."/>
            <person name="Prensier G."/>
            <person name="Barbe V."/>
            <person name="Peyretaillade E."/>
            <person name="Brottier P."/>
            <person name="Wincker P."/>
            <person name="Delbac F."/>
            <person name="El Alaoui H."/>
            <person name="Peyret P."/>
            <person name="Saurin W."/>
            <person name="Gouy M."/>
            <person name="Weissenbach J."/>
            <person name="Vivares C.P."/>
        </authorList>
    </citation>
    <scope>NUCLEOTIDE SEQUENCE [LARGE SCALE GENOMIC DNA]</scope>
    <source>
        <strain>GB-M1</strain>
    </source>
</reference>
<reference key="2">
    <citation type="journal article" date="2006" name="Proteomics">
        <title>Proteomic analysis of the eukaryotic parasite Encephalitozoon cuniculi (microsporidia): a reference map for proteins expressed in late sporogonial stages.</title>
        <authorList>
            <person name="Brosson D."/>
            <person name="Kuhn L."/>
            <person name="Delbac F."/>
            <person name="Garin J."/>
            <person name="Vivares C.P."/>
            <person name="Texier C."/>
        </authorList>
    </citation>
    <scope>IDENTIFICATION BY MASS SPECTROMETRY [LARGE SCALE ANALYSIS]</scope>
    <scope>DEVELOPMENTAL STAGE</scope>
</reference>
<organism>
    <name type="scientific">Encephalitozoon cuniculi (strain GB-M1)</name>
    <name type="common">Microsporidian parasite</name>
    <dbReference type="NCBI Taxonomy" id="284813"/>
    <lineage>
        <taxon>Eukaryota</taxon>
        <taxon>Fungi</taxon>
        <taxon>Fungi incertae sedis</taxon>
        <taxon>Microsporidia</taxon>
        <taxon>Unikaryonidae</taxon>
        <taxon>Encephalitozoon</taxon>
    </lineage>
</organism>
<proteinExistence type="evidence at protein level"/>
<comment type="function">
    <text evidence="1">Molecular chaperone; assists the folding of proteins upon ATP hydrolysis.</text>
</comment>
<comment type="subunit">
    <text evidence="1">Component of the T-complex protein 1 (TCP1) complex.</text>
</comment>
<comment type="subcellular location">
    <subcellularLocation>
        <location evidence="1">Cytoplasm</location>
    </subcellularLocation>
</comment>
<comment type="developmental stage">
    <text evidence="2">Expressed in late sporogonial stages.</text>
</comment>
<comment type="similarity">
    <text evidence="3">Belongs to the TCP-1 chaperonin family.</text>
</comment>
<keyword id="KW-0067">ATP-binding</keyword>
<keyword id="KW-0143">Chaperone</keyword>
<keyword id="KW-0963">Cytoplasm</keyword>
<keyword id="KW-0547">Nucleotide-binding</keyword>
<keyword id="KW-1185">Reference proteome</keyword>
<sequence length="484" mass="52842">MATERLNQVRTSVFQASQSLLQTLSTSLGPRGLDKMVVKDKKTVVTNDGATILKYLNHHPIHGILSSMSATQDEECGDGTTSVVILAGCLLESISSLLERNVHPSVICDNLEIAKKIGLRYIDRVKMECSEKDLISNVTTALCSKIASSTGEMAVEAIRGMEYVNGDKKNIRVVKKIGGNLDDVKAYKSILLECDLKDIPKKAKVGVIQFCLSAPKTNMDSKILINDPALMEKIIQDERKYILEMCKKIKKSGCTLLVVQKSILRESLSDLASHFLKQLNILVVNSVDRKDVDYICSAMNIQPVSEVDLLSPASLVDVETGEVEGMLEIKGYGCTILLRGCDDMVVEEAERSLNDALCVVKCLKELPFLVPGGGSIEMGIALMLSESTEGNIYVLREIAKAFEGVPYFLARNAGLYPVEIVSELRSELKQNCCAGISVRSGHAGDMVRDDSVVQPAKVSISVVTLALETVSMILKIDDILPARR</sequence>
<feature type="chain" id="PRO_0000378556" description="T-complex protein 1 subunit delta">
    <location>
        <begin position="1"/>
        <end position="484"/>
    </location>
</feature>
<dbReference type="EMBL" id="AL590442">
    <property type="protein sequence ID" value="CAD25083.1"/>
    <property type="molecule type" value="Genomic_DNA"/>
</dbReference>
<dbReference type="RefSeq" id="NP_584579.1">
    <property type="nucleotide sequence ID" value="NM_001040768.1"/>
</dbReference>
<dbReference type="SMR" id="Q8SSH3"/>
<dbReference type="FunCoup" id="Q8SSH3">
    <property type="interactions" value="341"/>
</dbReference>
<dbReference type="STRING" id="284813.Q8SSH3"/>
<dbReference type="GeneID" id="858569"/>
<dbReference type="KEGG" id="ecu:ECU02_0520"/>
<dbReference type="VEuPathDB" id="MicrosporidiaDB:ECU02_0520"/>
<dbReference type="HOGENOM" id="CLU_008891_9_2_1"/>
<dbReference type="InParanoid" id="Q8SSH3"/>
<dbReference type="OMA" id="HPAANMI"/>
<dbReference type="OrthoDB" id="10248520at2759"/>
<dbReference type="Proteomes" id="UP000000819">
    <property type="component" value="Chromosome II"/>
</dbReference>
<dbReference type="GO" id="GO:0005737">
    <property type="term" value="C:cytoplasm"/>
    <property type="evidence" value="ECO:0007669"/>
    <property type="project" value="UniProtKB-SubCell"/>
</dbReference>
<dbReference type="GO" id="GO:0005524">
    <property type="term" value="F:ATP binding"/>
    <property type="evidence" value="ECO:0007669"/>
    <property type="project" value="UniProtKB-KW"/>
</dbReference>
<dbReference type="GO" id="GO:0140662">
    <property type="term" value="F:ATP-dependent protein folding chaperone"/>
    <property type="evidence" value="ECO:0007669"/>
    <property type="project" value="InterPro"/>
</dbReference>
<dbReference type="Gene3D" id="3.50.7.10">
    <property type="entry name" value="GroEL"/>
    <property type="match status" value="1"/>
</dbReference>
<dbReference type="Gene3D" id="1.10.560.10">
    <property type="entry name" value="GroEL-like equatorial domain"/>
    <property type="match status" value="1"/>
</dbReference>
<dbReference type="Gene3D" id="3.30.260.10">
    <property type="entry name" value="TCP-1-like chaperonin intermediate domain"/>
    <property type="match status" value="1"/>
</dbReference>
<dbReference type="InterPro" id="IPR017998">
    <property type="entry name" value="Chaperone_TCP-1"/>
</dbReference>
<dbReference type="InterPro" id="IPR002423">
    <property type="entry name" value="Cpn60/GroEL/TCP-1"/>
</dbReference>
<dbReference type="InterPro" id="IPR027409">
    <property type="entry name" value="GroEL-like_apical_dom_sf"/>
</dbReference>
<dbReference type="InterPro" id="IPR027413">
    <property type="entry name" value="GROEL-like_equatorial_sf"/>
</dbReference>
<dbReference type="InterPro" id="IPR027410">
    <property type="entry name" value="TCP-1-like_intermed_sf"/>
</dbReference>
<dbReference type="PANTHER" id="PTHR11353">
    <property type="entry name" value="CHAPERONIN"/>
    <property type="match status" value="1"/>
</dbReference>
<dbReference type="Pfam" id="PF00118">
    <property type="entry name" value="Cpn60_TCP1"/>
    <property type="match status" value="1"/>
</dbReference>
<dbReference type="PRINTS" id="PR00304">
    <property type="entry name" value="TCOMPLEXTCP1"/>
</dbReference>
<dbReference type="SUPFAM" id="SSF52029">
    <property type="entry name" value="GroEL apical domain-like"/>
    <property type="match status" value="1"/>
</dbReference>
<dbReference type="SUPFAM" id="SSF48592">
    <property type="entry name" value="GroEL equatorial domain-like"/>
    <property type="match status" value="1"/>
</dbReference>
<dbReference type="SUPFAM" id="SSF54849">
    <property type="entry name" value="GroEL-intermediate domain like"/>
    <property type="match status" value="1"/>
</dbReference>
<name>TCPD_ENCCU</name>
<gene>
    <name type="primary">CCT4</name>
    <name type="ordered locus">ECU02_0520</name>
</gene>
<protein>
    <recommendedName>
        <fullName>T-complex protein 1 subunit delta</fullName>
        <shortName>TCP-1-delta</shortName>
    </recommendedName>
    <alternativeName>
        <fullName>CCT-delta</fullName>
    </alternativeName>
</protein>
<evidence type="ECO:0000250" key="1"/>
<evidence type="ECO:0000269" key="2">
    <source>
    </source>
</evidence>
<evidence type="ECO:0000305" key="3"/>